<evidence type="ECO:0000255" key="1">
    <source>
        <dbReference type="HAMAP-Rule" id="MF_01953"/>
    </source>
</evidence>
<keyword id="KW-0963">Cytoplasm</keyword>
<keyword id="KW-0378">Hydrolase</keyword>
<keyword id="KW-0479">Metal-binding</keyword>
<keyword id="KW-0533">Nickel</keyword>
<comment type="catalytic activity">
    <reaction evidence="1">
        <text>urea + 2 H2O + H(+) = hydrogencarbonate + 2 NH4(+)</text>
        <dbReference type="Rhea" id="RHEA:20557"/>
        <dbReference type="ChEBI" id="CHEBI:15377"/>
        <dbReference type="ChEBI" id="CHEBI:15378"/>
        <dbReference type="ChEBI" id="CHEBI:16199"/>
        <dbReference type="ChEBI" id="CHEBI:17544"/>
        <dbReference type="ChEBI" id="CHEBI:28938"/>
        <dbReference type="EC" id="3.5.1.5"/>
    </reaction>
</comment>
<comment type="cofactor">
    <cofactor evidence="1">
        <name>Ni cation</name>
        <dbReference type="ChEBI" id="CHEBI:25516"/>
    </cofactor>
    <text evidence="1">Binds 2 nickel ions per subunit.</text>
</comment>
<comment type="pathway">
    <text evidence="1">Nitrogen metabolism; urea degradation; CO(2) and NH(3) from urea (urease route): step 1/1.</text>
</comment>
<comment type="subunit">
    <text evidence="1">Heterotrimer of UreA (gamma), UreB (beta) and UreC (alpha) subunits. Three heterotrimers associate to form the active enzyme.</text>
</comment>
<comment type="subcellular location">
    <subcellularLocation>
        <location evidence="1">Cytoplasm</location>
    </subcellularLocation>
</comment>
<comment type="PTM">
    <text evidence="1">Carboxylation allows a single lysine to coordinate two nickel ions.</text>
</comment>
<comment type="similarity">
    <text evidence="1">Belongs to the metallo-dependent hydrolases superfamily. Urease alpha subunit family.</text>
</comment>
<reference key="1">
    <citation type="journal article" date="2007" name="Proc. Natl. Acad. Sci. U.S.A.">
        <title>Genome plasticity of BCG and impact on vaccine efficacy.</title>
        <authorList>
            <person name="Brosch R."/>
            <person name="Gordon S.V."/>
            <person name="Garnier T."/>
            <person name="Eiglmeier K."/>
            <person name="Frigui W."/>
            <person name="Valenti P."/>
            <person name="Dos Santos S."/>
            <person name="Duthoy S."/>
            <person name="Lacroix C."/>
            <person name="Garcia-Pelayo C."/>
            <person name="Inwald J.K."/>
            <person name="Golby P."/>
            <person name="Garcia J.N."/>
            <person name="Hewinson R.G."/>
            <person name="Behr M.A."/>
            <person name="Quail M.A."/>
            <person name="Churcher C."/>
            <person name="Barrell B.G."/>
            <person name="Parkhill J."/>
            <person name="Cole S.T."/>
        </authorList>
    </citation>
    <scope>NUCLEOTIDE SEQUENCE [LARGE SCALE GENOMIC DNA]</scope>
    <source>
        <strain>BCG / Pasteur 1173P2</strain>
    </source>
</reference>
<protein>
    <recommendedName>
        <fullName evidence="1">Urease subunit alpha</fullName>
        <ecNumber evidence="1">3.5.1.5</ecNumber>
    </recommendedName>
    <alternativeName>
        <fullName evidence="1">Urea amidohydrolase subunit alpha</fullName>
    </alternativeName>
</protein>
<proteinExistence type="inferred from homology"/>
<feature type="chain" id="PRO_1000070668" description="Urease subunit alpha">
    <location>
        <begin position="1"/>
        <end position="577"/>
    </location>
</feature>
<feature type="domain" description="Urease" evidence="1">
    <location>
        <begin position="136"/>
        <end position="577"/>
    </location>
</feature>
<feature type="active site" description="Proton donor" evidence="1">
    <location>
        <position position="327"/>
    </location>
</feature>
<feature type="binding site" evidence="1">
    <location>
        <position position="141"/>
    </location>
    <ligand>
        <name>Ni(2+)</name>
        <dbReference type="ChEBI" id="CHEBI:49786"/>
        <label>1</label>
    </ligand>
</feature>
<feature type="binding site" evidence="1">
    <location>
        <position position="143"/>
    </location>
    <ligand>
        <name>Ni(2+)</name>
        <dbReference type="ChEBI" id="CHEBI:49786"/>
        <label>1</label>
    </ligand>
</feature>
<feature type="binding site" description="via carbamate group" evidence="1">
    <location>
        <position position="224"/>
    </location>
    <ligand>
        <name>Ni(2+)</name>
        <dbReference type="ChEBI" id="CHEBI:49786"/>
        <label>1</label>
    </ligand>
</feature>
<feature type="binding site" description="via carbamate group" evidence="1">
    <location>
        <position position="224"/>
    </location>
    <ligand>
        <name>Ni(2+)</name>
        <dbReference type="ChEBI" id="CHEBI:49786"/>
        <label>2</label>
    </ligand>
</feature>
<feature type="binding site" evidence="1">
    <location>
        <position position="226"/>
    </location>
    <ligand>
        <name>substrate</name>
    </ligand>
</feature>
<feature type="binding site" evidence="1">
    <location>
        <position position="253"/>
    </location>
    <ligand>
        <name>Ni(2+)</name>
        <dbReference type="ChEBI" id="CHEBI:49786"/>
        <label>2</label>
    </ligand>
</feature>
<feature type="binding site" evidence="1">
    <location>
        <position position="279"/>
    </location>
    <ligand>
        <name>Ni(2+)</name>
        <dbReference type="ChEBI" id="CHEBI:49786"/>
        <label>2</label>
    </ligand>
</feature>
<feature type="binding site" evidence="1">
    <location>
        <position position="367"/>
    </location>
    <ligand>
        <name>Ni(2+)</name>
        <dbReference type="ChEBI" id="CHEBI:49786"/>
        <label>1</label>
    </ligand>
</feature>
<feature type="modified residue" description="N6-carboxylysine" evidence="1">
    <location>
        <position position="224"/>
    </location>
</feature>
<accession>A1KJR2</accession>
<organism>
    <name type="scientific">Mycobacterium bovis (strain BCG / Pasteur 1173P2)</name>
    <dbReference type="NCBI Taxonomy" id="410289"/>
    <lineage>
        <taxon>Bacteria</taxon>
        <taxon>Bacillati</taxon>
        <taxon>Actinomycetota</taxon>
        <taxon>Actinomycetes</taxon>
        <taxon>Mycobacteriales</taxon>
        <taxon>Mycobacteriaceae</taxon>
        <taxon>Mycobacterium</taxon>
        <taxon>Mycobacterium tuberculosis complex</taxon>
    </lineage>
</organism>
<name>URE1_MYCBP</name>
<gene>
    <name evidence="1" type="primary">ureC</name>
    <name type="ordered locus">BCG_1886</name>
</gene>
<sequence length="577" mass="60825">MARLSRERYAQLYGPTTGDRIRLADTNLLVEVTEDRCGGPGLAGDEAVFGGGKVLRESMGQGRASRADGAPDTVITGAVIIDYWGIIKADIGIRDGRIVGIGKAGNPDIMTGVHRDLVVGPSTEIISGNRRIVTAGTVDCHVHLICPQIIVEALAAGTTTIIGGGTGPAEGTKATTVTPGEWHLARMLESLDGWPVNFALLGKGNTVNPDALWEQLRGGASGFKLHEDWGSTPAAIDTCLAVADVAGVQVALHSDTLNETGFVEDTIGAIAGRSIHAYHTEGAGGGHAPDIITVAAQPNVLPSSTNPTRPHTVNTLDEHLDMLMVCHHLNPRIPEDLAFAESRIRPSTIAAEDVLHDMGAISMIGSDSQAMGRVGEVVLRTWQTAHVMKARRGALEGDPSGSQAADNNRVRRYIAKYTICPAIAHGMDHLIGSVEVGKLADLVLWEPAFFGVRPHVVLKGGAIAWAAMGDANASIPTPQPVLPRPMFGAAAATAAATSVHFVAPQSIDARLADRLAVNRGLAPVADVRAVGKTDLPLNDALPSIEVDPDTFTVRIDGQVWQPQPAAELPMTQRYFLF</sequence>
<dbReference type="EC" id="3.5.1.5" evidence="1"/>
<dbReference type="EMBL" id="AM408590">
    <property type="protein sequence ID" value="CAL71873.1"/>
    <property type="molecule type" value="Genomic_DNA"/>
</dbReference>
<dbReference type="RefSeq" id="WP_003899049.1">
    <property type="nucleotide sequence ID" value="NC_008769.1"/>
</dbReference>
<dbReference type="SMR" id="A1KJR2"/>
<dbReference type="MEROPS" id="M38.982"/>
<dbReference type="KEGG" id="mbb:BCG_1886"/>
<dbReference type="HOGENOM" id="CLU_000980_0_0_11"/>
<dbReference type="UniPathway" id="UPA00258">
    <property type="reaction ID" value="UER00370"/>
</dbReference>
<dbReference type="Proteomes" id="UP000001472">
    <property type="component" value="Chromosome"/>
</dbReference>
<dbReference type="GO" id="GO:0005737">
    <property type="term" value="C:cytoplasm"/>
    <property type="evidence" value="ECO:0007669"/>
    <property type="project" value="UniProtKB-SubCell"/>
</dbReference>
<dbReference type="GO" id="GO:0016151">
    <property type="term" value="F:nickel cation binding"/>
    <property type="evidence" value="ECO:0007669"/>
    <property type="project" value="UniProtKB-UniRule"/>
</dbReference>
<dbReference type="GO" id="GO:0009039">
    <property type="term" value="F:urease activity"/>
    <property type="evidence" value="ECO:0007669"/>
    <property type="project" value="UniProtKB-UniRule"/>
</dbReference>
<dbReference type="GO" id="GO:0043419">
    <property type="term" value="P:urea catabolic process"/>
    <property type="evidence" value="ECO:0007669"/>
    <property type="project" value="UniProtKB-UniRule"/>
</dbReference>
<dbReference type="CDD" id="cd00375">
    <property type="entry name" value="Urease_alpha"/>
    <property type="match status" value="1"/>
</dbReference>
<dbReference type="Gene3D" id="3.20.20.140">
    <property type="entry name" value="Metal-dependent hydrolases"/>
    <property type="match status" value="1"/>
</dbReference>
<dbReference type="Gene3D" id="2.30.40.10">
    <property type="entry name" value="Urease, subunit C, domain 1"/>
    <property type="match status" value="1"/>
</dbReference>
<dbReference type="HAMAP" id="MF_01953">
    <property type="entry name" value="Urease_alpha"/>
    <property type="match status" value="1"/>
</dbReference>
<dbReference type="InterPro" id="IPR006680">
    <property type="entry name" value="Amidohydro-rel"/>
</dbReference>
<dbReference type="InterPro" id="IPR011059">
    <property type="entry name" value="Metal-dep_hydrolase_composite"/>
</dbReference>
<dbReference type="InterPro" id="IPR032466">
    <property type="entry name" value="Metal_Hydrolase"/>
</dbReference>
<dbReference type="InterPro" id="IPR011612">
    <property type="entry name" value="Urease_alpha_N_dom"/>
</dbReference>
<dbReference type="InterPro" id="IPR050112">
    <property type="entry name" value="Urease_alpha_subunit"/>
</dbReference>
<dbReference type="InterPro" id="IPR017950">
    <property type="entry name" value="Urease_AS"/>
</dbReference>
<dbReference type="InterPro" id="IPR005848">
    <property type="entry name" value="Urease_asu"/>
</dbReference>
<dbReference type="InterPro" id="IPR017951">
    <property type="entry name" value="Urease_asu_c"/>
</dbReference>
<dbReference type="InterPro" id="IPR029754">
    <property type="entry name" value="Urease_Ni-bd"/>
</dbReference>
<dbReference type="NCBIfam" id="NF009685">
    <property type="entry name" value="PRK13206.1"/>
    <property type="match status" value="1"/>
</dbReference>
<dbReference type="NCBIfam" id="NF009686">
    <property type="entry name" value="PRK13207.1"/>
    <property type="match status" value="1"/>
</dbReference>
<dbReference type="NCBIfam" id="TIGR01792">
    <property type="entry name" value="urease_alph"/>
    <property type="match status" value="1"/>
</dbReference>
<dbReference type="PANTHER" id="PTHR43440">
    <property type="entry name" value="UREASE"/>
    <property type="match status" value="1"/>
</dbReference>
<dbReference type="PANTHER" id="PTHR43440:SF1">
    <property type="entry name" value="UREASE"/>
    <property type="match status" value="1"/>
</dbReference>
<dbReference type="Pfam" id="PF01979">
    <property type="entry name" value="Amidohydro_1"/>
    <property type="match status" value="1"/>
</dbReference>
<dbReference type="Pfam" id="PF00449">
    <property type="entry name" value="Urease_alpha"/>
    <property type="match status" value="1"/>
</dbReference>
<dbReference type="PRINTS" id="PR01752">
    <property type="entry name" value="UREASE"/>
</dbReference>
<dbReference type="SUPFAM" id="SSF51338">
    <property type="entry name" value="Composite domain of metallo-dependent hydrolases"/>
    <property type="match status" value="2"/>
</dbReference>
<dbReference type="SUPFAM" id="SSF51556">
    <property type="entry name" value="Metallo-dependent hydrolases"/>
    <property type="match status" value="1"/>
</dbReference>
<dbReference type="PROSITE" id="PS01120">
    <property type="entry name" value="UREASE_1"/>
    <property type="match status" value="1"/>
</dbReference>
<dbReference type="PROSITE" id="PS00145">
    <property type="entry name" value="UREASE_2"/>
    <property type="match status" value="1"/>
</dbReference>
<dbReference type="PROSITE" id="PS51368">
    <property type="entry name" value="UREASE_3"/>
    <property type="match status" value="1"/>
</dbReference>